<reference key="1">
    <citation type="submission" date="2004-08" db="EMBL/GenBank/DDBJ databases">
        <title>Cloning and sequence analysis of prion protein (PrPC) genes from bactrian camel and musk deer.</title>
        <authorList>
            <person name="Wu R."/>
            <person name="Xie Q.G."/>
            <person name="Liu X.T."/>
            <person name="Chen H.T."/>
        </authorList>
    </citation>
    <scope>NUCLEOTIDE SEQUENCE [GENOMIC DNA]</scope>
    <source>
        <tissue>Blood</tissue>
    </source>
</reference>
<organism>
    <name type="scientific">Moschus chrysogaster</name>
    <name type="common">Alpine musk deer</name>
    <dbReference type="NCBI Taxonomy" id="68412"/>
    <lineage>
        <taxon>Eukaryota</taxon>
        <taxon>Metazoa</taxon>
        <taxon>Chordata</taxon>
        <taxon>Craniata</taxon>
        <taxon>Vertebrata</taxon>
        <taxon>Euteleostomi</taxon>
        <taxon>Mammalia</taxon>
        <taxon>Eutheria</taxon>
        <taxon>Laurasiatheria</taxon>
        <taxon>Artiodactyla</taxon>
        <taxon>Ruminantia</taxon>
        <taxon>Pecora</taxon>
        <taxon>Moschidae</taxon>
        <taxon>Moschus</taxon>
    </lineage>
</organism>
<comment type="function">
    <text evidence="2 4">Its primary physiological function is unclear. Has cytoprotective activity against internal or environmental stresses. May play a role in neuronal development and synaptic plasticity. May be required for neuronal myelin sheath maintenance. May play a role in iron uptake and iron homeostasis. Soluble oligomers are toxic to cultured neuroblastoma cells and induce apoptosis (in vitro). Association with GPC1 (via its heparan sulfate chains) targets PRNP to lipid rafts. Also provides Cu(2+) or Zn(2+) for the ascorbate-mediated GPC1 deaminase degradation of its heparan sulfate side chains (By similarity).</text>
</comment>
<comment type="subunit">
    <text evidence="2 4">Monomer and homodimer. Has a tendency to aggregate into amyloid fibrils containing a cross-beta spine, formed by a steric zipper of superposed beta-strands. Soluble oligomers may represent an intermediate stage on the path to fibril formation. Copper binding may promote oligomerization. Interacts with GRB2, APP, ERI3/PRNPIP and SYN1. Mislocalized cytosolically exposed PrP interacts with MGRN1; this interaction alters MGRN1 subcellular location and causes lysosomal enlargement. Interacts with KIAA1191.</text>
</comment>
<comment type="subcellular location">
    <subcellularLocation>
        <location evidence="2">Cell membrane</location>
        <topology evidence="2">Lipid-anchor</topology>
        <topology evidence="2">GPI-anchor</topology>
    </subcellularLocation>
    <subcellularLocation>
        <location evidence="4">Golgi apparatus</location>
    </subcellularLocation>
    <text evidence="2">Targeted to lipid rafts via association with the heparan sulfate chains of GPC1. Colocates, in the presence of Cu(2+), to vesicles in para- and perinuclear regions, where both proteins undergo internalization. Heparin displaces PRNP from lipid rafts and promotes endocytosis.</text>
</comment>
<comment type="domain">
    <text evidence="2">The normal, monomeric form has a mainly alpha-helical structure. The disease-associated, protease-resistant form forms amyloid fibrils containing a cross-beta spine, formed by a steric zipper of superposed beta-strands. Disease mutations may favor intermolecular contacts via short beta strands, and may thereby trigger oligomerization.</text>
</comment>
<comment type="domain">
    <text evidence="2">Contains an N-terminal region composed of octamer repeats. At low copper concentrations, the sidechains of His residues from three or four repeats contribute to the binding of a single copper ion. Alternatively, a copper ion can be bound by interaction with the sidechain and backbone amide nitrogen of a single His residue. The observed copper binding stoichiometry suggests that two repeat regions cooperate to stabilize the binding of a single copper ion. At higher copper concentrations, each octamer can bind one copper ion by interactions with the His sidechain and Gly backbone atoms. A mixture of binding types may occur, especially in the case of octamer repeat expansion. Copper binding may stabilize the conformation of this region and may promote oligomerization.</text>
</comment>
<comment type="disease">
    <text evidence="7">Found in high quantity in the brain of humans and animals infected with degenerative neurological diseases such as kuru, Creutzfeldt-Jakob disease (CJD), Gerstmann-Straussler syndrome (GSS), scrapie, bovine spongiform encephalopathy (BSE), transmissible mink encephalopathy (TME), etc.</text>
</comment>
<comment type="similarity">
    <text evidence="7">Belongs to the prion family.</text>
</comment>
<proteinExistence type="inferred from homology"/>
<dbReference type="EMBL" id="AY723286">
    <property type="protein sequence ID" value="AAU02117.1"/>
    <property type="molecule type" value="Genomic_DNA"/>
</dbReference>
<dbReference type="SMR" id="Q68G95"/>
<dbReference type="GlyCosmos" id="Q68G95">
    <property type="glycosylation" value="2 sites, No reported glycans"/>
</dbReference>
<dbReference type="GO" id="GO:0005794">
    <property type="term" value="C:Golgi apparatus"/>
    <property type="evidence" value="ECO:0007669"/>
    <property type="project" value="UniProtKB-SubCell"/>
</dbReference>
<dbReference type="GO" id="GO:0005886">
    <property type="term" value="C:plasma membrane"/>
    <property type="evidence" value="ECO:0007669"/>
    <property type="project" value="UniProtKB-SubCell"/>
</dbReference>
<dbReference type="GO" id="GO:0098552">
    <property type="term" value="C:side of membrane"/>
    <property type="evidence" value="ECO:0007669"/>
    <property type="project" value="UniProtKB-KW"/>
</dbReference>
<dbReference type="GO" id="GO:0005507">
    <property type="term" value="F:copper ion binding"/>
    <property type="evidence" value="ECO:0000250"/>
    <property type="project" value="UniProtKB"/>
</dbReference>
<dbReference type="GO" id="GO:0051260">
    <property type="term" value="P:protein homooligomerization"/>
    <property type="evidence" value="ECO:0007669"/>
    <property type="project" value="InterPro"/>
</dbReference>
<dbReference type="FunFam" id="1.10.790.10:FF:000001">
    <property type="entry name" value="Major prion protein"/>
    <property type="match status" value="1"/>
</dbReference>
<dbReference type="Gene3D" id="1.10.790.10">
    <property type="entry name" value="Prion/Doppel protein, beta-ribbon domain"/>
    <property type="match status" value="1"/>
</dbReference>
<dbReference type="InterPro" id="IPR000817">
    <property type="entry name" value="Prion"/>
</dbReference>
<dbReference type="InterPro" id="IPR036924">
    <property type="entry name" value="Prion/Doppel_b-ribbon_dom_sf"/>
</dbReference>
<dbReference type="InterPro" id="IPR022416">
    <property type="entry name" value="Prion/Doppel_prot_b-ribbon_dom"/>
</dbReference>
<dbReference type="InterPro" id="IPR020949">
    <property type="entry name" value="Prion_copper_b_octapeptide"/>
</dbReference>
<dbReference type="InterPro" id="IPR025860">
    <property type="entry name" value="Prion_N"/>
</dbReference>
<dbReference type="PANTHER" id="PTHR15506">
    <property type="entry name" value="DOPPEL PRION"/>
    <property type="match status" value="1"/>
</dbReference>
<dbReference type="PANTHER" id="PTHR15506:SF2">
    <property type="entry name" value="MAJOR PRION PROTEIN"/>
    <property type="match status" value="1"/>
</dbReference>
<dbReference type="Pfam" id="PF00377">
    <property type="entry name" value="Prion"/>
    <property type="match status" value="1"/>
</dbReference>
<dbReference type="Pfam" id="PF11587">
    <property type="entry name" value="Prion_bPrPp"/>
    <property type="match status" value="1"/>
</dbReference>
<dbReference type="Pfam" id="PF03991">
    <property type="entry name" value="Prion_octapep"/>
    <property type="match status" value="1"/>
</dbReference>
<dbReference type="PRINTS" id="PR00341">
    <property type="entry name" value="PRION"/>
</dbReference>
<dbReference type="SMART" id="SM00157">
    <property type="entry name" value="PRP"/>
    <property type="match status" value="1"/>
</dbReference>
<dbReference type="SUPFAM" id="SSF54098">
    <property type="entry name" value="Prion-like"/>
    <property type="match status" value="1"/>
</dbReference>
<dbReference type="PROSITE" id="PS00291">
    <property type="entry name" value="PRION_1"/>
    <property type="match status" value="1"/>
</dbReference>
<dbReference type="PROSITE" id="PS00706">
    <property type="entry name" value="PRION_2"/>
    <property type="match status" value="1"/>
</dbReference>
<keyword id="KW-0034">Amyloid</keyword>
<keyword id="KW-1003">Cell membrane</keyword>
<keyword id="KW-0186">Copper</keyword>
<keyword id="KW-1015">Disulfide bond</keyword>
<keyword id="KW-0325">Glycoprotein</keyword>
<keyword id="KW-0333">Golgi apparatus</keyword>
<keyword id="KW-0336">GPI-anchor</keyword>
<keyword id="KW-0449">Lipoprotein</keyword>
<keyword id="KW-0472">Membrane</keyword>
<keyword id="KW-0479">Metal-binding</keyword>
<keyword id="KW-0640">Prion</keyword>
<keyword id="KW-0677">Repeat</keyword>
<keyword id="KW-0732">Signal</keyword>
<keyword id="KW-0862">Zinc</keyword>
<feature type="signal peptide" evidence="1">
    <location>
        <begin position="1"/>
        <end position="24"/>
    </location>
</feature>
<feature type="chain" id="PRO_0000224242" description="Major prion protein">
    <location>
        <begin position="25"/>
        <end position="233"/>
    </location>
</feature>
<feature type="propeptide" id="PRO_0000224243" description="Removed in mature form" evidence="5">
    <location>
        <begin position="234"/>
        <end position="256"/>
    </location>
</feature>
<feature type="repeat" description="1">
    <location>
        <begin position="54"/>
        <end position="62"/>
    </location>
</feature>
<feature type="repeat" description="2">
    <location>
        <begin position="63"/>
        <end position="70"/>
    </location>
</feature>
<feature type="repeat" description="3">
    <location>
        <begin position="71"/>
        <end position="78"/>
    </location>
</feature>
<feature type="repeat" description="4">
    <location>
        <begin position="79"/>
        <end position="86"/>
    </location>
</feature>
<feature type="repeat" description="5">
    <location>
        <begin position="87"/>
        <end position="95"/>
    </location>
</feature>
<feature type="region of interest" description="Interaction with GRB2, ERI3 and SYN1" evidence="4">
    <location>
        <begin position="25"/>
        <end position="233"/>
    </location>
</feature>
<feature type="region of interest" description="Disordered" evidence="6">
    <location>
        <begin position="28"/>
        <end position="110"/>
    </location>
</feature>
<feature type="region of interest" description="5 X 8 AA tandem repeats of P-H-G-G-G-W-G-Q">
    <location>
        <begin position="54"/>
        <end position="95"/>
    </location>
</feature>
<feature type="compositionally biased region" description="Gly residues" evidence="6">
    <location>
        <begin position="56"/>
        <end position="97"/>
    </location>
</feature>
<feature type="binding site" evidence="2">
    <location>
        <position position="64"/>
    </location>
    <ligand>
        <name>Cu(2+)</name>
        <dbReference type="ChEBI" id="CHEBI:29036"/>
        <label>1</label>
    </ligand>
</feature>
<feature type="binding site" evidence="2">
    <location>
        <position position="65"/>
    </location>
    <ligand>
        <name>Cu(2+)</name>
        <dbReference type="ChEBI" id="CHEBI:29036"/>
        <label>1</label>
    </ligand>
</feature>
<feature type="binding site" evidence="2">
    <location>
        <position position="66"/>
    </location>
    <ligand>
        <name>Cu(2+)</name>
        <dbReference type="ChEBI" id="CHEBI:29036"/>
        <label>1</label>
    </ligand>
</feature>
<feature type="binding site" evidence="2">
    <location>
        <position position="72"/>
    </location>
    <ligand>
        <name>Cu(2+)</name>
        <dbReference type="ChEBI" id="CHEBI:29036"/>
        <label>2</label>
    </ligand>
</feature>
<feature type="binding site" evidence="2">
    <location>
        <position position="73"/>
    </location>
    <ligand>
        <name>Cu(2+)</name>
        <dbReference type="ChEBI" id="CHEBI:29036"/>
        <label>2</label>
    </ligand>
</feature>
<feature type="binding site" evidence="2">
    <location>
        <position position="74"/>
    </location>
    <ligand>
        <name>Cu(2+)</name>
        <dbReference type="ChEBI" id="CHEBI:29036"/>
        <label>2</label>
    </ligand>
</feature>
<feature type="binding site" evidence="2">
    <location>
        <position position="80"/>
    </location>
    <ligand>
        <name>Cu(2+)</name>
        <dbReference type="ChEBI" id="CHEBI:29036"/>
        <label>3</label>
    </ligand>
</feature>
<feature type="binding site" evidence="2">
    <location>
        <position position="81"/>
    </location>
    <ligand>
        <name>Cu(2+)</name>
        <dbReference type="ChEBI" id="CHEBI:29036"/>
        <label>3</label>
    </ligand>
</feature>
<feature type="binding site" evidence="2">
    <location>
        <position position="82"/>
    </location>
    <ligand>
        <name>Cu(2+)</name>
        <dbReference type="ChEBI" id="CHEBI:29036"/>
        <label>3</label>
    </ligand>
</feature>
<feature type="binding site" evidence="2">
    <location>
        <position position="88"/>
    </location>
    <ligand>
        <name>Cu(2+)</name>
        <dbReference type="ChEBI" id="CHEBI:29036"/>
        <label>4</label>
    </ligand>
</feature>
<feature type="binding site" evidence="2">
    <location>
        <position position="90"/>
    </location>
    <ligand>
        <name>Cu(2+)</name>
        <dbReference type="ChEBI" id="CHEBI:29036"/>
        <label>4</label>
    </ligand>
</feature>
<feature type="binding site" evidence="2">
    <location>
        <position position="91"/>
    </location>
    <ligand>
        <name>Cu(2+)</name>
        <dbReference type="ChEBI" id="CHEBI:29036"/>
        <label>4</label>
    </ligand>
</feature>
<feature type="lipid moiety-binding region" description="GPI-anchor amidated alanine" evidence="5">
    <location>
        <position position="233"/>
    </location>
</feature>
<feature type="glycosylation site" description="N-linked (GlcNAc...) asparagine" evidence="5">
    <location>
        <position position="184"/>
    </location>
</feature>
<feature type="glycosylation site" description="N-linked (GlcNAc...) asparagine" evidence="5">
    <location>
        <position position="200"/>
    </location>
</feature>
<feature type="disulfide bond" evidence="3">
    <location>
        <begin position="182"/>
        <end position="217"/>
    </location>
</feature>
<gene>
    <name type="primary">PRNP</name>
    <name type="synonym">PRP</name>
</gene>
<protein>
    <recommendedName>
        <fullName>Major prion protein</fullName>
        <shortName>PrP</shortName>
    </recommendedName>
    <cdAntigenName>CD230</cdAntigenName>
</protein>
<sequence length="256" mass="27942">MVKSHIGSWILVLFVAMWSDVGLCKKRPKPGGGWNTGGSRYPGQGSPGGNRYPPQGAGGWGQPHGGGWGQPHGGGWGQPHGGGWGQPHGGGGWGQGGTHNQWNKPSKPKTNMKHVAGAAAAGAVVGGLGGYMLGSAMSRPLIHFGNDYEDRYYRENMYRYPNQVYYRPVDQYSNQNNFVHDCVNITVKQHTVTTTTKGENFTETDIKIMERVVEQMCITQYQRESQAYYQRGASVILFSSPPVILLISFLIFLIVG</sequence>
<accession>Q68G95</accession>
<name>PRIO_MOSCH</name>
<evidence type="ECO:0000250" key="1"/>
<evidence type="ECO:0000250" key="2">
    <source>
        <dbReference type="UniProtKB" id="P04156"/>
    </source>
</evidence>
<evidence type="ECO:0000250" key="3">
    <source>
        <dbReference type="UniProtKB" id="P04273"/>
    </source>
</evidence>
<evidence type="ECO:0000250" key="4">
    <source>
        <dbReference type="UniProtKB" id="P04925"/>
    </source>
</evidence>
<evidence type="ECO:0000255" key="5"/>
<evidence type="ECO:0000256" key="6">
    <source>
        <dbReference type="SAM" id="MobiDB-lite"/>
    </source>
</evidence>
<evidence type="ECO:0000305" key="7"/>